<dbReference type="EMBL" id="CP000563">
    <property type="protein sequence ID" value="ABN61375.1"/>
    <property type="status" value="ALT_INIT"/>
    <property type="molecule type" value="Genomic_DNA"/>
</dbReference>
<dbReference type="RefSeq" id="WP_006081364.1">
    <property type="nucleotide sequence ID" value="NC_009052.1"/>
</dbReference>
<dbReference type="SMR" id="A3D3R2"/>
<dbReference type="STRING" id="325240.Sbal_1869"/>
<dbReference type="KEGG" id="sbl:Sbal_1869"/>
<dbReference type="HOGENOM" id="CLU_155118_1_0_6"/>
<dbReference type="OrthoDB" id="7062382at2"/>
<dbReference type="Proteomes" id="UP000001557">
    <property type="component" value="Chromosome"/>
</dbReference>
<dbReference type="Gene3D" id="3.10.510.20">
    <property type="entry name" value="YcgL domain"/>
    <property type="match status" value="1"/>
</dbReference>
<dbReference type="HAMAP" id="MF_01866">
    <property type="entry name" value="UPF0745"/>
    <property type="match status" value="1"/>
</dbReference>
<dbReference type="InterPro" id="IPR038068">
    <property type="entry name" value="YcgL-like_sf"/>
</dbReference>
<dbReference type="InterPro" id="IPR027354">
    <property type="entry name" value="YcgL_dom"/>
</dbReference>
<dbReference type="PANTHER" id="PTHR38109">
    <property type="entry name" value="PROTEIN YCGL"/>
    <property type="match status" value="1"/>
</dbReference>
<dbReference type="PANTHER" id="PTHR38109:SF1">
    <property type="entry name" value="PROTEIN YCGL"/>
    <property type="match status" value="1"/>
</dbReference>
<dbReference type="Pfam" id="PF05166">
    <property type="entry name" value="YcgL"/>
    <property type="match status" value="1"/>
</dbReference>
<dbReference type="SUPFAM" id="SSF160191">
    <property type="entry name" value="YcgL-like"/>
    <property type="match status" value="1"/>
</dbReference>
<dbReference type="PROSITE" id="PS51648">
    <property type="entry name" value="YCGL"/>
    <property type="match status" value="1"/>
</dbReference>
<name>Y1869_SHEB5</name>
<gene>
    <name type="ordered locus">Sbal_1869</name>
</gene>
<protein>
    <recommendedName>
        <fullName evidence="1">YcgL domain-containing protein Sbal_1869</fullName>
    </recommendedName>
</protein>
<comment type="sequence caution" evidence="2">
    <conflict type="erroneous initiation">
        <sequence resource="EMBL-CDS" id="ABN61375"/>
    </conflict>
</comment>
<feature type="chain" id="PRO_0000375364" description="YcgL domain-containing protein Sbal_1869">
    <location>
        <begin position="1"/>
        <end position="92"/>
    </location>
</feature>
<feature type="domain" description="YcgL" evidence="1">
    <location>
        <begin position="1"/>
        <end position="85"/>
    </location>
</feature>
<proteinExistence type="inferred from homology"/>
<accession>A3D3R2</accession>
<sequence length="92" mass="10374">MLCAVYKSSRKADTYLFVKKRDCFDDVPAPLMEMFGVPKLVMVFPIAKRDALGMADIQKVRAAMEENGFYLQIPPPQVNLLAEHKLSLGIKD</sequence>
<keyword id="KW-1185">Reference proteome</keyword>
<reference key="1">
    <citation type="submission" date="2007-02" db="EMBL/GenBank/DDBJ databases">
        <title>Complete sequence of chromosome of Shewanella baltica OS155.</title>
        <authorList>
            <consortium name="US DOE Joint Genome Institute"/>
            <person name="Copeland A."/>
            <person name="Lucas S."/>
            <person name="Lapidus A."/>
            <person name="Barry K."/>
            <person name="Detter J.C."/>
            <person name="Glavina del Rio T."/>
            <person name="Hammon N."/>
            <person name="Israni S."/>
            <person name="Dalin E."/>
            <person name="Tice H."/>
            <person name="Pitluck S."/>
            <person name="Sims D.R."/>
            <person name="Brettin T."/>
            <person name="Bruce D."/>
            <person name="Han C."/>
            <person name="Tapia R."/>
            <person name="Brainard J."/>
            <person name="Schmutz J."/>
            <person name="Larimer F."/>
            <person name="Land M."/>
            <person name="Hauser L."/>
            <person name="Kyrpides N."/>
            <person name="Mikhailova N."/>
            <person name="Brettar I."/>
            <person name="Klappenbach J."/>
            <person name="Konstantinidis K."/>
            <person name="Rodrigues J."/>
            <person name="Tiedje J."/>
            <person name="Richardson P."/>
        </authorList>
    </citation>
    <scope>NUCLEOTIDE SEQUENCE [LARGE SCALE GENOMIC DNA]</scope>
    <source>
        <strain>OS155 / ATCC BAA-1091</strain>
    </source>
</reference>
<organism>
    <name type="scientific">Shewanella baltica (strain OS155 / ATCC BAA-1091)</name>
    <dbReference type="NCBI Taxonomy" id="325240"/>
    <lineage>
        <taxon>Bacteria</taxon>
        <taxon>Pseudomonadati</taxon>
        <taxon>Pseudomonadota</taxon>
        <taxon>Gammaproteobacteria</taxon>
        <taxon>Alteromonadales</taxon>
        <taxon>Shewanellaceae</taxon>
        <taxon>Shewanella</taxon>
    </lineage>
</organism>
<evidence type="ECO:0000255" key="1">
    <source>
        <dbReference type="HAMAP-Rule" id="MF_01866"/>
    </source>
</evidence>
<evidence type="ECO:0000305" key="2"/>